<evidence type="ECO:0000255" key="1">
    <source>
        <dbReference type="HAMAP-Rule" id="MF_00097"/>
    </source>
</evidence>
<name>THIE_CAMJ8</name>
<comment type="function">
    <text evidence="1">Condenses 4-methyl-5-(beta-hydroxyethyl)thiazole monophosphate (THZ-P) and 2-methyl-4-amino-5-hydroxymethyl pyrimidine pyrophosphate (HMP-PP) to form thiamine monophosphate (TMP).</text>
</comment>
<comment type="catalytic activity">
    <reaction evidence="1">
        <text>2-[(2R,5Z)-2-carboxy-4-methylthiazol-5(2H)-ylidene]ethyl phosphate + 4-amino-2-methyl-5-(diphosphooxymethyl)pyrimidine + 2 H(+) = thiamine phosphate + CO2 + diphosphate</text>
        <dbReference type="Rhea" id="RHEA:47844"/>
        <dbReference type="ChEBI" id="CHEBI:15378"/>
        <dbReference type="ChEBI" id="CHEBI:16526"/>
        <dbReference type="ChEBI" id="CHEBI:33019"/>
        <dbReference type="ChEBI" id="CHEBI:37575"/>
        <dbReference type="ChEBI" id="CHEBI:57841"/>
        <dbReference type="ChEBI" id="CHEBI:62899"/>
        <dbReference type="EC" id="2.5.1.3"/>
    </reaction>
</comment>
<comment type="catalytic activity">
    <reaction evidence="1">
        <text>2-(2-carboxy-4-methylthiazol-5-yl)ethyl phosphate + 4-amino-2-methyl-5-(diphosphooxymethyl)pyrimidine + 2 H(+) = thiamine phosphate + CO2 + diphosphate</text>
        <dbReference type="Rhea" id="RHEA:47848"/>
        <dbReference type="ChEBI" id="CHEBI:15378"/>
        <dbReference type="ChEBI" id="CHEBI:16526"/>
        <dbReference type="ChEBI" id="CHEBI:33019"/>
        <dbReference type="ChEBI" id="CHEBI:37575"/>
        <dbReference type="ChEBI" id="CHEBI:57841"/>
        <dbReference type="ChEBI" id="CHEBI:62890"/>
        <dbReference type="EC" id="2.5.1.3"/>
    </reaction>
</comment>
<comment type="catalytic activity">
    <reaction evidence="1">
        <text>4-methyl-5-(2-phosphooxyethyl)-thiazole + 4-amino-2-methyl-5-(diphosphooxymethyl)pyrimidine + H(+) = thiamine phosphate + diphosphate</text>
        <dbReference type="Rhea" id="RHEA:22328"/>
        <dbReference type="ChEBI" id="CHEBI:15378"/>
        <dbReference type="ChEBI" id="CHEBI:33019"/>
        <dbReference type="ChEBI" id="CHEBI:37575"/>
        <dbReference type="ChEBI" id="CHEBI:57841"/>
        <dbReference type="ChEBI" id="CHEBI:58296"/>
        <dbReference type="EC" id="2.5.1.3"/>
    </reaction>
</comment>
<comment type="cofactor">
    <cofactor evidence="1">
        <name>Mg(2+)</name>
        <dbReference type="ChEBI" id="CHEBI:18420"/>
    </cofactor>
    <text evidence="1">Binds 1 Mg(2+) ion per subunit.</text>
</comment>
<comment type="pathway">
    <text evidence="1">Cofactor biosynthesis; thiamine diphosphate biosynthesis; thiamine phosphate from 4-amino-2-methyl-5-diphosphomethylpyrimidine and 4-methyl-5-(2-phosphoethyl)-thiazole: step 1/1.</text>
</comment>
<comment type="similarity">
    <text evidence="1">Belongs to the thiamine-phosphate synthase family.</text>
</comment>
<proteinExistence type="inferred from homology"/>
<feature type="chain" id="PRO_1000071283" description="Thiamine-phosphate synthase">
    <location>
        <begin position="1"/>
        <end position="210"/>
    </location>
</feature>
<feature type="binding site" evidence="1">
    <location>
        <begin position="39"/>
        <end position="43"/>
    </location>
    <ligand>
        <name>4-amino-2-methyl-5-(diphosphooxymethyl)pyrimidine</name>
        <dbReference type="ChEBI" id="CHEBI:57841"/>
    </ligand>
</feature>
<feature type="binding site" evidence="1">
    <location>
        <position position="71"/>
    </location>
    <ligand>
        <name>4-amino-2-methyl-5-(diphosphooxymethyl)pyrimidine</name>
        <dbReference type="ChEBI" id="CHEBI:57841"/>
    </ligand>
</feature>
<feature type="binding site" evidence="1">
    <location>
        <position position="72"/>
    </location>
    <ligand>
        <name>Mg(2+)</name>
        <dbReference type="ChEBI" id="CHEBI:18420"/>
    </ligand>
</feature>
<feature type="binding site" evidence="1">
    <location>
        <position position="91"/>
    </location>
    <ligand>
        <name>Mg(2+)</name>
        <dbReference type="ChEBI" id="CHEBI:18420"/>
    </ligand>
</feature>
<feature type="binding site" evidence="1">
    <location>
        <position position="110"/>
    </location>
    <ligand>
        <name>4-amino-2-methyl-5-(diphosphooxymethyl)pyrimidine</name>
        <dbReference type="ChEBI" id="CHEBI:57841"/>
    </ligand>
</feature>
<feature type="binding site" evidence="1">
    <location>
        <begin position="134"/>
        <end position="136"/>
    </location>
    <ligand>
        <name>2-[(2R,5Z)-2-carboxy-4-methylthiazol-5(2H)-ylidene]ethyl phosphate</name>
        <dbReference type="ChEBI" id="CHEBI:62899"/>
    </ligand>
</feature>
<feature type="binding site" evidence="1">
    <location>
        <position position="137"/>
    </location>
    <ligand>
        <name>4-amino-2-methyl-5-(diphosphooxymethyl)pyrimidine</name>
        <dbReference type="ChEBI" id="CHEBI:57841"/>
    </ligand>
</feature>
<feature type="binding site" evidence="1">
    <location>
        <position position="163"/>
    </location>
    <ligand>
        <name>2-[(2R,5Z)-2-carboxy-4-methylthiazol-5(2H)-ylidene]ethyl phosphate</name>
        <dbReference type="ChEBI" id="CHEBI:62899"/>
    </ligand>
</feature>
<keyword id="KW-0460">Magnesium</keyword>
<keyword id="KW-0479">Metal-binding</keyword>
<keyword id="KW-0784">Thiamine biosynthesis</keyword>
<keyword id="KW-0808">Transferase</keyword>
<dbReference type="EC" id="2.5.1.3" evidence="1"/>
<dbReference type="EMBL" id="CP000814">
    <property type="protein sequence ID" value="ABV52621.1"/>
    <property type="molecule type" value="Genomic_DNA"/>
</dbReference>
<dbReference type="RefSeq" id="WP_002856400.1">
    <property type="nucleotide sequence ID" value="NC_009839.1"/>
</dbReference>
<dbReference type="SMR" id="A8FMD4"/>
<dbReference type="KEGG" id="cju:C8J_1022"/>
<dbReference type="HOGENOM" id="CLU_018272_3_2_7"/>
<dbReference type="UniPathway" id="UPA00060">
    <property type="reaction ID" value="UER00141"/>
</dbReference>
<dbReference type="GO" id="GO:0005737">
    <property type="term" value="C:cytoplasm"/>
    <property type="evidence" value="ECO:0007669"/>
    <property type="project" value="TreeGrafter"/>
</dbReference>
<dbReference type="GO" id="GO:0000287">
    <property type="term" value="F:magnesium ion binding"/>
    <property type="evidence" value="ECO:0007669"/>
    <property type="project" value="UniProtKB-UniRule"/>
</dbReference>
<dbReference type="GO" id="GO:0004789">
    <property type="term" value="F:thiamine-phosphate diphosphorylase activity"/>
    <property type="evidence" value="ECO:0007669"/>
    <property type="project" value="UniProtKB-UniRule"/>
</dbReference>
<dbReference type="GO" id="GO:0009228">
    <property type="term" value="P:thiamine biosynthetic process"/>
    <property type="evidence" value="ECO:0007669"/>
    <property type="project" value="UniProtKB-KW"/>
</dbReference>
<dbReference type="GO" id="GO:0009229">
    <property type="term" value="P:thiamine diphosphate biosynthetic process"/>
    <property type="evidence" value="ECO:0007669"/>
    <property type="project" value="UniProtKB-UniRule"/>
</dbReference>
<dbReference type="CDD" id="cd00564">
    <property type="entry name" value="TMP_TenI"/>
    <property type="match status" value="1"/>
</dbReference>
<dbReference type="FunFam" id="3.20.20.70:FF:000096">
    <property type="entry name" value="Thiamine-phosphate synthase"/>
    <property type="match status" value="1"/>
</dbReference>
<dbReference type="Gene3D" id="3.20.20.70">
    <property type="entry name" value="Aldolase class I"/>
    <property type="match status" value="1"/>
</dbReference>
<dbReference type="HAMAP" id="MF_00097">
    <property type="entry name" value="TMP_synthase"/>
    <property type="match status" value="1"/>
</dbReference>
<dbReference type="InterPro" id="IPR013785">
    <property type="entry name" value="Aldolase_TIM"/>
</dbReference>
<dbReference type="InterPro" id="IPR036206">
    <property type="entry name" value="ThiamineP_synth_sf"/>
</dbReference>
<dbReference type="InterPro" id="IPR022998">
    <property type="entry name" value="ThiamineP_synth_TenI"/>
</dbReference>
<dbReference type="InterPro" id="IPR034291">
    <property type="entry name" value="TMP_synthase"/>
</dbReference>
<dbReference type="NCBIfam" id="TIGR00693">
    <property type="entry name" value="thiE"/>
    <property type="match status" value="1"/>
</dbReference>
<dbReference type="PANTHER" id="PTHR20857:SF23">
    <property type="entry name" value="THIAMINE BIOSYNTHETIC BIFUNCTIONAL ENZYME"/>
    <property type="match status" value="1"/>
</dbReference>
<dbReference type="PANTHER" id="PTHR20857">
    <property type="entry name" value="THIAMINE-PHOSPHATE PYROPHOSPHORYLASE"/>
    <property type="match status" value="1"/>
</dbReference>
<dbReference type="Pfam" id="PF02581">
    <property type="entry name" value="TMP-TENI"/>
    <property type="match status" value="1"/>
</dbReference>
<dbReference type="SUPFAM" id="SSF51391">
    <property type="entry name" value="Thiamin phosphate synthase"/>
    <property type="match status" value="1"/>
</dbReference>
<accession>A8FMD4</accession>
<sequence length="210" mass="22980">MKNKLDLSLYLVASQGNKSEECFLNTLENAIKGGVSIIQLREKELNAREFYKLGLKVQKLCKAYKIPFLINDRVDIALALDADGVHLGQEDLEVKLARKLLGDEKIIGLSLKKLEQLEFIQGANYLGCGAIKATPTKESSLLSLELLSQICDKSPIGVVAIGGVDKAVLDELKGINLSGVAVVRAIMDAKDAFLAAKELKRKIYENLPLK</sequence>
<reference key="1">
    <citation type="journal article" date="2007" name="J. Bacteriol.">
        <title>The complete genome sequence of Campylobacter jejuni strain 81116 (NCTC11828).</title>
        <authorList>
            <person name="Pearson B.M."/>
            <person name="Gaskin D.J.H."/>
            <person name="Segers R.P.A.M."/>
            <person name="Wells J.M."/>
            <person name="Nuijten P.J.M."/>
            <person name="van Vliet A.H.M."/>
        </authorList>
    </citation>
    <scope>NUCLEOTIDE SEQUENCE [LARGE SCALE GENOMIC DNA]</scope>
    <source>
        <strain>81116 / NCTC 11828</strain>
    </source>
</reference>
<protein>
    <recommendedName>
        <fullName evidence="1">Thiamine-phosphate synthase</fullName>
        <shortName evidence="1">TP synthase</shortName>
        <shortName evidence="1">TPS</shortName>
        <ecNumber evidence="1">2.5.1.3</ecNumber>
    </recommendedName>
    <alternativeName>
        <fullName evidence="1">Thiamine-phosphate pyrophosphorylase</fullName>
        <shortName evidence="1">TMP pyrophosphorylase</shortName>
        <shortName evidence="1">TMP-PPase</shortName>
    </alternativeName>
</protein>
<organism>
    <name type="scientific">Campylobacter jejuni subsp. jejuni serotype O:6 (strain 81116 / NCTC 11828)</name>
    <dbReference type="NCBI Taxonomy" id="407148"/>
    <lineage>
        <taxon>Bacteria</taxon>
        <taxon>Pseudomonadati</taxon>
        <taxon>Campylobacterota</taxon>
        <taxon>Epsilonproteobacteria</taxon>
        <taxon>Campylobacterales</taxon>
        <taxon>Campylobacteraceae</taxon>
        <taxon>Campylobacter</taxon>
    </lineage>
</organism>
<gene>
    <name evidence="1" type="primary">thiE</name>
    <name type="ordered locus">C8J_1022</name>
</gene>